<sequence length="547" mass="61797">MEATRNLVSSSPSFQTKTHLKSSYSSPSSVVMLHDQTTTPVVNSRHLNSLSRHFPASVLSQEPREESRPLSHALRDDRTSQLTLERRQFDELVSSREDEKFEQQLLHSTGLWNLLISPLTSETKLPAVVSPLADAELCDVVALAQKALSASKQAALLVDDTEANPSDNIKDSLSTSSSMSLPEKGNIVRSKRQLERRAKNRRAPKSNDVDDEGYVPQKTSAKKKYKQGADNDDALQLFLWGPETKQLLTAKEEAELISHIQHLLKLEKVKTKLESQNGCEPTIGEWAEAMGISSPVLKSDIHRGRSSREKLITANLRLVVHIAKQYQNRGLNFQDLLQEGSMGLMKSVEKFKPQSGCRFATYAYWWIRQSIRKSIFQNSRTIRLPENVYMLLGKVSEARKTCVQEGNYRPSKEELAGHVGVSTEKLDKLLYNTRTPLSMQQPIWSDQDTTFQEITPDSGIETPTMSVGKQLMRNHVRNLLNVLSPKERRIIKLRFGIDGGKQRSLSEIGEIYGLSKERVRQLESRALYRLKQNMNSHGLHAYADLLV</sequence>
<organism>
    <name type="scientific">Arabidopsis thaliana</name>
    <name type="common">Mouse-ear cress</name>
    <dbReference type="NCBI Taxonomy" id="3702"/>
    <lineage>
        <taxon>Eukaryota</taxon>
        <taxon>Viridiplantae</taxon>
        <taxon>Streptophyta</taxon>
        <taxon>Embryophyta</taxon>
        <taxon>Tracheophyta</taxon>
        <taxon>Spermatophyta</taxon>
        <taxon>Magnoliopsida</taxon>
        <taxon>eudicotyledons</taxon>
        <taxon>Gunneridae</taxon>
        <taxon>Pentapetalae</taxon>
        <taxon>rosids</taxon>
        <taxon>malvids</taxon>
        <taxon>Brassicales</taxon>
        <taxon>Brassicaceae</taxon>
        <taxon>Camelineae</taxon>
        <taxon>Arabidopsis</taxon>
    </lineage>
</organism>
<name>SIGF_ARATH</name>
<accession>Q9LD95</accession>
<accession>Q9SJK8</accession>
<accession>Q9SMV8</accession>
<dbReference type="EMBL" id="AB029916">
    <property type="protein sequence ID" value="BAA92288.1"/>
    <property type="molecule type" value="mRNA"/>
</dbReference>
<dbReference type="EMBL" id="AJ277389">
    <property type="protein sequence ID" value="CAB89775.1"/>
    <property type="molecule type" value="mRNA"/>
</dbReference>
<dbReference type="EMBL" id="AC006922">
    <property type="protein sequence ID" value="AAD31584.2"/>
    <property type="molecule type" value="Genomic_DNA"/>
</dbReference>
<dbReference type="EMBL" id="CP002685">
    <property type="protein sequence ID" value="AEC09332.1"/>
    <property type="molecule type" value="Genomic_DNA"/>
</dbReference>
<dbReference type="EMBL" id="AY059768">
    <property type="protein sequence ID" value="AAL24116.1"/>
    <property type="molecule type" value="mRNA"/>
</dbReference>
<dbReference type="EMBL" id="AY091182">
    <property type="protein sequence ID" value="AAM14121.1"/>
    <property type="molecule type" value="mRNA"/>
</dbReference>
<dbReference type="EMBL" id="AJ250812">
    <property type="protein sequence ID" value="CAB60192.1"/>
    <property type="molecule type" value="mRNA"/>
</dbReference>
<dbReference type="PIR" id="B84787">
    <property type="entry name" value="B84787"/>
</dbReference>
<dbReference type="PIR" id="T52653">
    <property type="entry name" value="T52653"/>
</dbReference>
<dbReference type="RefSeq" id="NP_565856.1">
    <property type="nucleotide sequence ID" value="NM_129255.3"/>
</dbReference>
<dbReference type="SMR" id="Q9LD95"/>
<dbReference type="BioGRID" id="3617">
    <property type="interactions" value="7"/>
</dbReference>
<dbReference type="FunCoup" id="Q9LD95">
    <property type="interactions" value="970"/>
</dbReference>
<dbReference type="IntAct" id="Q9LD95">
    <property type="interactions" value="7"/>
</dbReference>
<dbReference type="MINT" id="Q9LD95"/>
<dbReference type="STRING" id="3702.Q9LD95"/>
<dbReference type="iPTMnet" id="Q9LD95"/>
<dbReference type="PaxDb" id="3702-AT2G36990.1"/>
<dbReference type="ProteomicsDB" id="234579"/>
<dbReference type="EnsemblPlants" id="AT2G36990.1">
    <property type="protein sequence ID" value="AT2G36990.1"/>
    <property type="gene ID" value="AT2G36990"/>
</dbReference>
<dbReference type="GeneID" id="818273"/>
<dbReference type="Gramene" id="AT2G36990.1">
    <property type="protein sequence ID" value="AT2G36990.1"/>
    <property type="gene ID" value="AT2G36990"/>
</dbReference>
<dbReference type="KEGG" id="ath:AT2G36990"/>
<dbReference type="Araport" id="AT2G36990"/>
<dbReference type="TAIR" id="AT2G36990">
    <property type="gene designation" value="SIGF"/>
</dbReference>
<dbReference type="eggNOG" id="ENOG502QVXR">
    <property type="taxonomic scope" value="Eukaryota"/>
</dbReference>
<dbReference type="HOGENOM" id="CLU_014793_11_1_1"/>
<dbReference type="InParanoid" id="Q9LD95"/>
<dbReference type="OMA" id="VQCGREP"/>
<dbReference type="PhylomeDB" id="Q9LD95"/>
<dbReference type="PRO" id="PR:Q9LD95"/>
<dbReference type="Proteomes" id="UP000006548">
    <property type="component" value="Chromosome 2"/>
</dbReference>
<dbReference type="ExpressionAtlas" id="Q9LD95">
    <property type="expression patterns" value="baseline and differential"/>
</dbReference>
<dbReference type="GO" id="GO:0009507">
    <property type="term" value="C:chloroplast"/>
    <property type="evidence" value="ECO:0000314"/>
    <property type="project" value="TAIR"/>
</dbReference>
<dbReference type="GO" id="GO:0009536">
    <property type="term" value="C:plastid"/>
    <property type="evidence" value="ECO:0000314"/>
    <property type="project" value="TAIR"/>
</dbReference>
<dbReference type="GO" id="GO:0003677">
    <property type="term" value="F:DNA binding"/>
    <property type="evidence" value="ECO:0007669"/>
    <property type="project" value="UniProtKB-KW"/>
</dbReference>
<dbReference type="GO" id="GO:0016987">
    <property type="term" value="F:sigma factor activity"/>
    <property type="evidence" value="ECO:0000314"/>
    <property type="project" value="TAIR"/>
</dbReference>
<dbReference type="GO" id="GO:0071483">
    <property type="term" value="P:cellular response to blue light"/>
    <property type="evidence" value="ECO:0000270"/>
    <property type="project" value="UniProtKB"/>
</dbReference>
<dbReference type="GO" id="GO:0071482">
    <property type="term" value="P:cellular response to light stimulus"/>
    <property type="evidence" value="ECO:0000315"/>
    <property type="project" value="UniProtKB"/>
</dbReference>
<dbReference type="GO" id="GO:0006352">
    <property type="term" value="P:DNA-templated transcription initiation"/>
    <property type="evidence" value="ECO:0000250"/>
    <property type="project" value="UniProtKB"/>
</dbReference>
<dbReference type="GO" id="GO:0045893">
    <property type="term" value="P:positive regulation of DNA-templated transcription"/>
    <property type="evidence" value="ECO:0000315"/>
    <property type="project" value="TAIR"/>
</dbReference>
<dbReference type="GO" id="GO:0090351">
    <property type="term" value="P:seedling development"/>
    <property type="evidence" value="ECO:0000315"/>
    <property type="project" value="TAIR"/>
</dbReference>
<dbReference type="CDD" id="cd06171">
    <property type="entry name" value="Sigma70_r4"/>
    <property type="match status" value="1"/>
</dbReference>
<dbReference type="FunFam" id="1.10.10.10:FF:000698">
    <property type="entry name" value="RNA polymerase sigma factor"/>
    <property type="match status" value="1"/>
</dbReference>
<dbReference type="Gene3D" id="1.10.601.10">
    <property type="entry name" value="RNA Polymerase Primary Sigma Factor"/>
    <property type="match status" value="1"/>
</dbReference>
<dbReference type="Gene3D" id="1.10.10.10">
    <property type="entry name" value="Winged helix-like DNA-binding domain superfamily/Winged helix DNA-binding domain"/>
    <property type="match status" value="2"/>
</dbReference>
<dbReference type="InterPro" id="IPR014284">
    <property type="entry name" value="RNA_pol_sigma-70_dom"/>
</dbReference>
<dbReference type="InterPro" id="IPR000943">
    <property type="entry name" value="RNA_pol_sigma70"/>
</dbReference>
<dbReference type="InterPro" id="IPR007627">
    <property type="entry name" value="RNA_pol_sigma70_r2"/>
</dbReference>
<dbReference type="InterPro" id="IPR007624">
    <property type="entry name" value="RNA_pol_sigma70_r3"/>
</dbReference>
<dbReference type="InterPro" id="IPR007630">
    <property type="entry name" value="RNA_pol_sigma70_r4"/>
</dbReference>
<dbReference type="InterPro" id="IPR013325">
    <property type="entry name" value="RNA_pol_sigma_r2"/>
</dbReference>
<dbReference type="InterPro" id="IPR013324">
    <property type="entry name" value="RNA_pol_sigma_r3/r4-like"/>
</dbReference>
<dbReference type="InterPro" id="IPR016262">
    <property type="entry name" value="RNA_pol_sigma_SigB/C/D/F"/>
</dbReference>
<dbReference type="InterPro" id="IPR050239">
    <property type="entry name" value="Sigma-70_RNA_pol_init_factors"/>
</dbReference>
<dbReference type="InterPro" id="IPR036388">
    <property type="entry name" value="WH-like_DNA-bd_sf"/>
</dbReference>
<dbReference type="NCBIfam" id="TIGR02937">
    <property type="entry name" value="sigma70-ECF"/>
    <property type="match status" value="1"/>
</dbReference>
<dbReference type="PANTHER" id="PTHR30603">
    <property type="entry name" value="RNA POLYMERASE SIGMA FACTOR RPO"/>
    <property type="match status" value="1"/>
</dbReference>
<dbReference type="PANTHER" id="PTHR30603:SF45">
    <property type="entry name" value="RNA POLYMERASE SIGMA FACTOR SIGF, CHLOROPLASTIC"/>
    <property type="match status" value="1"/>
</dbReference>
<dbReference type="Pfam" id="PF04542">
    <property type="entry name" value="Sigma70_r2"/>
    <property type="match status" value="1"/>
</dbReference>
<dbReference type="Pfam" id="PF04539">
    <property type="entry name" value="Sigma70_r3"/>
    <property type="match status" value="1"/>
</dbReference>
<dbReference type="Pfam" id="PF04545">
    <property type="entry name" value="Sigma70_r4"/>
    <property type="match status" value="1"/>
</dbReference>
<dbReference type="PIRSF" id="PIRSF000767">
    <property type="entry name" value="RNA_pol_sigma_SigB/C/D"/>
    <property type="match status" value="1"/>
</dbReference>
<dbReference type="PRINTS" id="PR00046">
    <property type="entry name" value="SIGMA70FCT"/>
</dbReference>
<dbReference type="SUPFAM" id="SSF88946">
    <property type="entry name" value="Sigma2 domain of RNA polymerase sigma factors"/>
    <property type="match status" value="1"/>
</dbReference>
<dbReference type="SUPFAM" id="SSF88659">
    <property type="entry name" value="Sigma3 and sigma4 domains of RNA polymerase sigma factors"/>
    <property type="match status" value="2"/>
</dbReference>
<dbReference type="PROSITE" id="PS00715">
    <property type="entry name" value="SIGMA70_1"/>
    <property type="match status" value="1"/>
</dbReference>
<dbReference type="PROSITE" id="PS00716">
    <property type="entry name" value="SIGMA70_2"/>
    <property type="match status" value="1"/>
</dbReference>
<comment type="function">
    <text evidence="6 7 8 10 12">Sigma factors are initiation factors that promote the attachment of plastid-encoded RNA polymerase (PEP) to specific initiation sites and are then released. Regulates transcription in chloroplast in a DG1-dependent manner. Involved in light-dependent chloroplast development. Required during early plant development and primary leaf formation.</text>
</comment>
<comment type="subunit">
    <text evidence="12">Interacts (via N-terminus) with DG1 (via C-terminus).</text>
</comment>
<comment type="interaction">
    <interactant intactId="EBI-4455937">
        <id>Q9LD95</id>
    </interactant>
    <interactant intactId="EBI-963606">
        <id>Q9LQT8</id>
        <label>GAI</label>
    </interactant>
    <organismsDiffer>false</organismsDiffer>
    <experiments>4</experiments>
</comment>
<comment type="subcellular location">
    <subcellularLocation>
        <location evidence="4">Plastid</location>
        <location evidence="4">Chloroplast</location>
    </subcellularLocation>
</comment>
<comment type="tissue specificity">
    <text evidence="6">Expressed in seedling, accumulating progressively. Present in leaves but not in roots.</text>
</comment>
<comment type="induction">
    <text evidence="5 6 9">Induced by red light. Slightly induced by blue light.</text>
</comment>
<comment type="PTM">
    <text evidence="11">Phosphorylated to acquire sigma activity; site-specific phosphorylation regulates promoter affinity. Phosphorylation at Ser-174 by chloroplastic CK2 requires prior phosphorylation at Ser-177. Phosphorylation at either Ser-94, Ser-95 or Ser-174 is required for sigma activation.</text>
</comment>
<comment type="disruption phenotype">
    <text evidence="6 7 8 10">Chlorophyll-defective seedlings with reduced levels of chloroplast-encoded transcripts (e.g. atpB, atpE and rbcL). Delayed light-dependent chloroplast development. Constitutive acclimation to light stress. Suppressor of FLU disruption phenotype; seedlings missing both FLU and SIGF do not bleach when grown under non-permissive dark/light conditions.</text>
</comment>
<comment type="similarity">
    <text evidence="13">Belongs to the sigma-70 factor family.</text>
</comment>
<keyword id="KW-0150">Chloroplast</keyword>
<keyword id="KW-0238">DNA-binding</keyword>
<keyword id="KW-0597">Phosphoprotein</keyword>
<keyword id="KW-0934">Plastid</keyword>
<keyword id="KW-1185">Reference proteome</keyword>
<keyword id="KW-0731">Sigma factor</keyword>
<keyword id="KW-0804">Transcription</keyword>
<keyword id="KW-0805">Transcription regulation</keyword>
<keyword id="KW-0809">Transit peptide</keyword>
<evidence type="ECO:0000250" key="1"/>
<evidence type="ECO:0000255" key="2"/>
<evidence type="ECO:0000256" key="3">
    <source>
        <dbReference type="SAM" id="MobiDB-lite"/>
    </source>
</evidence>
<evidence type="ECO:0000269" key="4">
    <source>
    </source>
</evidence>
<evidence type="ECO:0000269" key="5">
    <source>
    </source>
</evidence>
<evidence type="ECO:0000269" key="6">
    <source>
    </source>
</evidence>
<evidence type="ECO:0000269" key="7">
    <source>
    </source>
</evidence>
<evidence type="ECO:0000269" key="8">
    <source>
    </source>
</evidence>
<evidence type="ECO:0000269" key="9">
    <source>
    </source>
</evidence>
<evidence type="ECO:0000269" key="10">
    <source>
    </source>
</evidence>
<evidence type="ECO:0000269" key="11">
    <source>
    </source>
</evidence>
<evidence type="ECO:0000269" key="12">
    <source>
    </source>
</evidence>
<evidence type="ECO:0000305" key="13"/>
<reference key="1">
    <citation type="journal article" date="2000" name="FEBS Lett.">
        <title>Three new nuclear genes, sigD, sigE and sigF, encoding putative plastid RNA polymerase sigma factors in Arabidopsis thaliana.</title>
        <authorList>
            <person name="Fujiwara M."/>
            <person name="Nagashima A."/>
            <person name="Kanamaru K."/>
            <person name="Tanaka K."/>
            <person name="Takahashi H."/>
        </authorList>
    </citation>
    <scope>NUCLEOTIDE SEQUENCE [MRNA]</scope>
    <scope>SUBCELLULAR LOCATION</scope>
</reference>
<reference key="2">
    <citation type="submission" date="2000-04" db="EMBL/GenBank/DDBJ databases">
        <title>Arabidopsis thaliana gene for sigma factor-like protein.</title>
        <authorList>
            <person name="Hoffmann M."/>
            <person name="Binder S."/>
        </authorList>
    </citation>
    <scope>NUCLEOTIDE SEQUENCE [MRNA]</scope>
    <source>
        <strain>cv. Columbia</strain>
    </source>
</reference>
<reference key="3">
    <citation type="journal article" date="1999" name="Nature">
        <title>Sequence and analysis of chromosome 2 of the plant Arabidopsis thaliana.</title>
        <authorList>
            <person name="Lin X."/>
            <person name="Kaul S."/>
            <person name="Rounsley S.D."/>
            <person name="Shea T.P."/>
            <person name="Benito M.-I."/>
            <person name="Town C.D."/>
            <person name="Fujii C.Y."/>
            <person name="Mason T.M."/>
            <person name="Bowman C.L."/>
            <person name="Barnstead M.E."/>
            <person name="Feldblyum T.V."/>
            <person name="Buell C.R."/>
            <person name="Ketchum K.A."/>
            <person name="Lee J.J."/>
            <person name="Ronning C.M."/>
            <person name="Koo H.L."/>
            <person name="Moffat K.S."/>
            <person name="Cronin L.A."/>
            <person name="Shen M."/>
            <person name="Pai G."/>
            <person name="Van Aken S."/>
            <person name="Umayam L."/>
            <person name="Tallon L.J."/>
            <person name="Gill J.E."/>
            <person name="Adams M.D."/>
            <person name="Carrera A.J."/>
            <person name="Creasy T.H."/>
            <person name="Goodman H.M."/>
            <person name="Somerville C.R."/>
            <person name="Copenhaver G.P."/>
            <person name="Preuss D."/>
            <person name="Nierman W.C."/>
            <person name="White O."/>
            <person name="Eisen J.A."/>
            <person name="Salzberg S.L."/>
            <person name="Fraser C.M."/>
            <person name="Venter J.C."/>
        </authorList>
    </citation>
    <scope>NUCLEOTIDE SEQUENCE [LARGE SCALE GENOMIC DNA]</scope>
    <source>
        <strain>cv. Columbia</strain>
    </source>
</reference>
<reference key="4">
    <citation type="journal article" date="2017" name="Plant J.">
        <title>Araport11: a complete reannotation of the Arabidopsis thaliana reference genome.</title>
        <authorList>
            <person name="Cheng C.Y."/>
            <person name="Krishnakumar V."/>
            <person name="Chan A.P."/>
            <person name="Thibaud-Nissen F."/>
            <person name="Schobel S."/>
            <person name="Town C.D."/>
        </authorList>
    </citation>
    <scope>GENOME REANNOTATION</scope>
    <source>
        <strain>cv. Columbia</strain>
    </source>
</reference>
<reference key="5">
    <citation type="journal article" date="2003" name="Science">
        <title>Empirical analysis of transcriptional activity in the Arabidopsis genome.</title>
        <authorList>
            <person name="Yamada K."/>
            <person name="Lim J."/>
            <person name="Dale J.M."/>
            <person name="Chen H."/>
            <person name="Shinn P."/>
            <person name="Palm C.J."/>
            <person name="Southwick A.M."/>
            <person name="Wu H.C."/>
            <person name="Kim C.J."/>
            <person name="Nguyen M."/>
            <person name="Pham P.K."/>
            <person name="Cheuk R.F."/>
            <person name="Karlin-Newmann G."/>
            <person name="Liu S.X."/>
            <person name="Lam B."/>
            <person name="Sakano H."/>
            <person name="Wu T."/>
            <person name="Yu G."/>
            <person name="Miranda M."/>
            <person name="Quach H.L."/>
            <person name="Tripp M."/>
            <person name="Chang C.H."/>
            <person name="Lee J.M."/>
            <person name="Toriumi M.J."/>
            <person name="Chan M.M."/>
            <person name="Tang C.C."/>
            <person name="Onodera C.S."/>
            <person name="Deng J.M."/>
            <person name="Akiyama K."/>
            <person name="Ansari Y."/>
            <person name="Arakawa T."/>
            <person name="Banh J."/>
            <person name="Banno F."/>
            <person name="Bowser L."/>
            <person name="Brooks S.Y."/>
            <person name="Carninci P."/>
            <person name="Chao Q."/>
            <person name="Choy N."/>
            <person name="Enju A."/>
            <person name="Goldsmith A.D."/>
            <person name="Gurjal M."/>
            <person name="Hansen N.F."/>
            <person name="Hayashizaki Y."/>
            <person name="Johnson-Hopson C."/>
            <person name="Hsuan V.W."/>
            <person name="Iida K."/>
            <person name="Karnes M."/>
            <person name="Khan S."/>
            <person name="Koesema E."/>
            <person name="Ishida J."/>
            <person name="Jiang P.X."/>
            <person name="Jones T."/>
            <person name="Kawai J."/>
            <person name="Kamiya A."/>
            <person name="Meyers C."/>
            <person name="Nakajima M."/>
            <person name="Narusaka M."/>
            <person name="Seki M."/>
            <person name="Sakurai T."/>
            <person name="Satou M."/>
            <person name="Tamse R."/>
            <person name="Vaysberg M."/>
            <person name="Wallender E.K."/>
            <person name="Wong C."/>
            <person name="Yamamura Y."/>
            <person name="Yuan S."/>
            <person name="Shinozaki K."/>
            <person name="Davis R.W."/>
            <person name="Theologis A."/>
            <person name="Ecker J.R."/>
        </authorList>
    </citation>
    <scope>NUCLEOTIDE SEQUENCE [LARGE SCALE MRNA]</scope>
    <source>
        <strain>cv. Columbia</strain>
    </source>
</reference>
<reference key="6">
    <citation type="journal article" date="2000" name="J. Biol. Chem.">
        <title>Evolutionary conservation of C-terminal domains of primary sigma(70)-type transcription factors between plants and bacteria.</title>
        <authorList>
            <person name="Hakimi M.-A."/>
            <person name="Privat I."/>
            <person name="Valay J.-G."/>
            <person name="Lerbs-Mache S."/>
        </authorList>
    </citation>
    <scope>NUCLEOTIDE SEQUENCE [MRNA] OF 61-547</scope>
    <source>
        <strain>cv. C24</strain>
    </source>
</reference>
<reference key="7">
    <citation type="journal article" date="2000" name="Biochimie">
        <title>The role of sigma factors in plastid transcription.</title>
        <authorList>
            <person name="Allison L.A."/>
        </authorList>
    </citation>
    <scope>GENE FAMILY</scope>
    <scope>NOMENCLATURE</scope>
    <source>
        <strain>cv. Columbia</strain>
        <tissue>Seedling hypocotyl</tissue>
    </source>
</reference>
<reference key="8">
    <citation type="journal article" date="2002" name="FEBS Lett.">
        <title>Blue light specific and differential expression of a plastid sigma factor, Sig5 in Arabidopsis thaliana.</title>
        <authorList>
            <person name="Tsunoyama Y."/>
            <person name="Morikawa K."/>
            <person name="Shiina T."/>
            <person name="Toyoshima Y."/>
        </authorList>
    </citation>
    <scope>INDUCTION BY BLUE LIGHT</scope>
    <source>
        <strain>cv. Columbia</strain>
    </source>
</reference>
<reference key="9">
    <citation type="journal article" date="2005" name="Plant J.">
        <title>A nuclear-encoded sigma factor, Arabidopsis SIG6, recognizes sigma-70 type chloroplast promoters and regulates early chloroplast development in cotyledons.</title>
        <authorList>
            <person name="Ishizaki Y."/>
            <person name="Tsunoyama Y."/>
            <person name="Hatano K."/>
            <person name="Ando K."/>
            <person name="Kato K."/>
            <person name="Shinmyo A."/>
            <person name="Kobori M."/>
            <person name="Takeba G."/>
            <person name="Nakahira Y."/>
            <person name="Shiina T."/>
        </authorList>
    </citation>
    <scope>FUNCTION</scope>
    <scope>DISRUPTION PHENOTYPE</scope>
    <scope>TISSUE SPECIFICITY</scope>
    <scope>INDUCTION BY LIGHT</scope>
    <source>
        <strain>cv. Columbia</strain>
    </source>
</reference>
<reference key="10">
    <citation type="journal article" date="2006" name="FEBS Lett.">
        <title>A promoter switch that can rescue a plant sigma factor mutant.</title>
        <authorList>
            <person name="Schweer J."/>
            <person name="Loschelder H."/>
            <person name="Link G."/>
        </authorList>
    </citation>
    <scope>FUNCTION</scope>
    <scope>DISRUPTION PHENOTYPE</scope>
    <source>
        <strain>cv. Columbia</strain>
    </source>
</reference>
<reference key="11">
    <citation type="journal article" date="2006" name="Plant Physiol.">
        <title>Dual temporal role of plastid sigma factor 6 in Arabidopsis development.</title>
        <authorList>
            <person name="Loschelder H."/>
            <person name="Schweer J."/>
            <person name="Link B."/>
            <person name="Link G."/>
        </authorList>
    </citation>
    <scope>FUNCTION</scope>
    <scope>DISRUPTION PHENOTYPE</scope>
</reference>
<reference key="12">
    <citation type="journal article" date="2008" name="Plant J.">
        <title>Light induction of Arabidopsis SIG1 and SIG5 transcripts in mature leaves: differential roles of cryptochrome 1 and cryptochrome 2 and dual function of SIG5 in the recognition of plastid promoters.</title>
        <authorList>
            <person name="Onda Y."/>
            <person name="Yagi Y."/>
            <person name="Saito Y."/>
            <person name="Takenaka N."/>
            <person name="Toyoshima Y."/>
        </authorList>
    </citation>
    <scope>INDUCTION BY LIGHT</scope>
</reference>
<reference key="13">
    <citation type="journal article" date="2009" name="Plant Cell Physiol.">
        <title>Characterization of soldat8, a suppressor of singlet oxygen-induced cell death in Arabidopsis seedlings.</title>
        <authorList>
            <person name="Coll N.S."/>
            <person name="Danon A."/>
            <person name="Meurer J."/>
            <person name="Cho W.K."/>
            <person name="Apel K."/>
        </authorList>
    </citation>
    <scope>FUNCTION</scope>
    <scope>DISRUPTION PHENOTYPE</scope>
</reference>
<reference key="14">
    <citation type="journal article" date="2010" name="Plant J.">
        <title>AtSIG6, a plastid sigma factor from Arabidopsis, reveals functional impact of cpCK2 phosphorylation.</title>
        <authorList>
            <person name="Schweer J."/>
            <person name="Tuerkeri H."/>
            <person name="Link B."/>
            <person name="Link G."/>
        </authorList>
    </citation>
    <scope>PHOSPHORYLATION AT SER-94; SER-95; SER-174; SER-176; SER-177; SER-180 AND THR-249 BY CK2</scope>
    <scope>MUTAGENESIS OF SER-94; SER-95; 94-SER-SER-95; SER-174; SER-176; SER-177; SER-180 AND THR-249</scope>
</reference>
<reference key="15">
    <citation type="journal article" date="2010" name="Plant J.">
        <title>Interaction of the pentatricopeptide-repeat protein DELAYED GREENING 1 with sigma factor SIG6 in the regulation of chloroplast gene expression in Arabidopsis cotyledons.</title>
        <authorList>
            <person name="Chi W."/>
            <person name="Mao J."/>
            <person name="Li Q."/>
            <person name="Ji D."/>
            <person name="Zou M."/>
            <person name="Lu C."/>
            <person name="Zhang L."/>
        </authorList>
    </citation>
    <scope>FUNCTION</scope>
    <scope>INTERACTION WITH DG1</scope>
</reference>
<feature type="transit peptide" description="Chloroplast" evidence="2">
    <location>
        <begin position="1"/>
        <end position="55"/>
    </location>
</feature>
<feature type="chain" id="PRO_0000418097" description="RNA polymerase sigma factor sigF, chloroplastic">
    <location>
        <begin position="56"/>
        <end position="547"/>
    </location>
</feature>
<feature type="DNA-binding region" description="H-T-H motif" evidence="1">
    <location>
        <begin position="505"/>
        <end position="524"/>
    </location>
</feature>
<feature type="region of interest" description="Disordered" evidence="3">
    <location>
        <begin position="1"/>
        <end position="28"/>
    </location>
</feature>
<feature type="region of interest" description="Disordered" evidence="3">
    <location>
        <begin position="54"/>
        <end position="79"/>
    </location>
</feature>
<feature type="region of interest" description="Disordered" evidence="3">
    <location>
        <begin position="163"/>
        <end position="226"/>
    </location>
</feature>
<feature type="short sequence motif" description="Polymerase core binding">
    <location>
        <begin position="335"/>
        <end position="348"/>
    </location>
</feature>
<feature type="compositionally biased region" description="Polar residues" evidence="3">
    <location>
        <begin position="1"/>
        <end position="17"/>
    </location>
</feature>
<feature type="compositionally biased region" description="Basic and acidic residues" evidence="3">
    <location>
        <begin position="62"/>
        <end position="79"/>
    </location>
</feature>
<feature type="compositionally biased region" description="Low complexity" evidence="3">
    <location>
        <begin position="172"/>
        <end position="181"/>
    </location>
</feature>
<feature type="modified residue" description="Phosphoserine; by CK2" evidence="11">
    <location>
        <position position="94"/>
    </location>
</feature>
<feature type="modified residue" description="Phosphoserine; by CK2" evidence="11">
    <location>
        <position position="95"/>
    </location>
</feature>
<feature type="modified residue" description="Phosphoserine; by CK2" evidence="11">
    <location>
        <position position="174"/>
    </location>
</feature>
<feature type="modified residue" description="Phosphoserine; by CK2" evidence="11">
    <location>
        <position position="176"/>
    </location>
</feature>
<feature type="modified residue" description="Phosphoserine; by CK2" evidence="11">
    <location>
        <position position="177"/>
    </location>
</feature>
<feature type="modified residue" description="Phosphoserine; by CK2" evidence="11">
    <location>
        <position position="180"/>
    </location>
</feature>
<feature type="modified residue" description="Phosphothreonine; by CK2" evidence="11">
    <location>
        <position position="249"/>
    </location>
</feature>
<feature type="mutagenesis site" description="Chlorophyll-defective seedlings." evidence="11">
    <original>SS</original>
    <variation>AA</variation>
    <location>
        <begin position="94"/>
        <end position="95"/>
    </location>
</feature>
<feature type="mutagenesis site" description="Loss of sigma factor activity but green seedlings." evidence="11">
    <original>S</original>
    <variation>A</variation>
    <location>
        <position position="94"/>
    </location>
</feature>
<feature type="mutagenesis site" description="Loss of sigma factor activity but green seedlings." evidence="11">
    <original>S</original>
    <variation>A</variation>
    <location>
        <position position="95"/>
    </location>
</feature>
<feature type="mutagenesis site" description="Loss of sigma factor activity and chlorophyll-defective seedlings." evidence="11">
    <original>S</original>
    <variation>A</variation>
    <location>
        <position position="174"/>
    </location>
</feature>
<feature type="mutagenesis site" description="Chlorophyll-defective seedlings." evidence="11">
    <original>S</original>
    <variation>Q</variation>
    <location>
        <position position="174"/>
    </location>
</feature>
<feature type="mutagenesis site" description="Normal sigma factor activity upon phosphorylation but green seedlings." evidence="11">
    <original>S</original>
    <variation>A</variation>
    <location>
        <position position="176"/>
    </location>
</feature>
<feature type="mutagenesis site" description="Chlorophyll-defective seedlings." evidence="11">
    <original>S</original>
    <variation>A</variation>
    <variation>D</variation>
    <location>
        <position position="177"/>
    </location>
</feature>
<feature type="mutagenesis site" description="Loss of sigma factor activity but green seedlings." evidence="11">
    <original>S</original>
    <variation>A</variation>
    <location>
        <position position="180"/>
    </location>
</feature>
<feature type="mutagenesis site" description="Reduced sigma factor activity upon phosphorylation but green seedlings." evidence="11">
    <original>T</original>
    <variation>A</variation>
    <location>
        <position position="249"/>
    </location>
</feature>
<protein>
    <recommendedName>
        <fullName>RNA polymerase sigma factor sigF, chloroplastic</fullName>
        <shortName>Sigma factor F</shortName>
        <shortName>Sigma-F</shortName>
    </recommendedName>
    <alternativeName>
        <fullName>Protein SINGLET OXYGEN-LINKED DEATH ACTIVATOR 8</fullName>
    </alternativeName>
    <alternativeName>
        <fullName>RNA polymerase sigma factor sig6</fullName>
        <shortName>Atsig6</shortName>
        <shortName>Sigma factor 6</shortName>
    </alternativeName>
</protein>
<gene>
    <name type="primary">SIGF</name>
    <name type="synonym">SIG6</name>
    <name type="synonym">SOLDAT8</name>
    <name type="ordered locus">At2g36990</name>
    <name type="ORF">T1J8</name>
</gene>
<proteinExistence type="evidence at protein level"/>